<protein>
    <recommendedName>
        <fullName evidence="1">D-erythrose-4-phosphate dehydrogenase</fullName>
        <shortName evidence="1">E4PDH</shortName>
        <ecNumber evidence="1">1.2.1.72</ecNumber>
    </recommendedName>
</protein>
<organism>
    <name type="scientific">Salmonella dublin (strain CT_02021853)</name>
    <dbReference type="NCBI Taxonomy" id="439851"/>
    <lineage>
        <taxon>Bacteria</taxon>
        <taxon>Pseudomonadati</taxon>
        <taxon>Pseudomonadota</taxon>
        <taxon>Gammaproteobacteria</taxon>
        <taxon>Enterobacterales</taxon>
        <taxon>Enterobacteriaceae</taxon>
        <taxon>Salmonella</taxon>
    </lineage>
</organism>
<gene>
    <name evidence="1" type="primary">epd</name>
    <name type="ordered locus">SeD_A3412</name>
</gene>
<evidence type="ECO:0000255" key="1">
    <source>
        <dbReference type="HAMAP-Rule" id="MF_01640"/>
    </source>
</evidence>
<feature type="chain" id="PRO_1000186833" description="D-erythrose-4-phosphate dehydrogenase">
    <location>
        <begin position="1"/>
        <end position="348"/>
    </location>
</feature>
<feature type="active site" description="Nucleophile" evidence="1">
    <location>
        <position position="155"/>
    </location>
</feature>
<feature type="binding site" evidence="1">
    <location>
        <begin position="12"/>
        <end position="13"/>
    </location>
    <ligand>
        <name>NAD(+)</name>
        <dbReference type="ChEBI" id="CHEBI:57540"/>
    </ligand>
</feature>
<feature type="binding site" evidence="1">
    <location>
        <position position="81"/>
    </location>
    <ligand>
        <name>NAD(+)</name>
        <dbReference type="ChEBI" id="CHEBI:57540"/>
    </ligand>
</feature>
<feature type="binding site" evidence="1">
    <location>
        <begin position="154"/>
        <end position="156"/>
    </location>
    <ligand>
        <name>substrate</name>
    </ligand>
</feature>
<feature type="binding site" evidence="1">
    <location>
        <position position="200"/>
    </location>
    <ligand>
        <name>substrate</name>
    </ligand>
</feature>
<feature type="binding site" evidence="1">
    <location>
        <begin position="213"/>
        <end position="214"/>
    </location>
    <ligand>
        <name>substrate</name>
    </ligand>
</feature>
<feature type="binding site" evidence="1">
    <location>
        <position position="236"/>
    </location>
    <ligand>
        <name>substrate</name>
    </ligand>
</feature>
<feature type="binding site" evidence="1">
    <location>
        <position position="318"/>
    </location>
    <ligand>
        <name>NAD(+)</name>
        <dbReference type="ChEBI" id="CHEBI:57540"/>
    </ligand>
</feature>
<feature type="site" description="Activates thiol group during catalysis" evidence="1">
    <location>
        <position position="182"/>
    </location>
</feature>
<reference key="1">
    <citation type="journal article" date="2011" name="J. Bacteriol.">
        <title>Comparative genomics of 28 Salmonella enterica isolates: evidence for CRISPR-mediated adaptive sublineage evolution.</title>
        <authorList>
            <person name="Fricke W.F."/>
            <person name="Mammel M.K."/>
            <person name="McDermott P.F."/>
            <person name="Tartera C."/>
            <person name="White D.G."/>
            <person name="Leclerc J.E."/>
            <person name="Ravel J."/>
            <person name="Cebula T.A."/>
        </authorList>
    </citation>
    <scope>NUCLEOTIDE SEQUENCE [LARGE SCALE GENOMIC DNA]</scope>
    <source>
        <strain>CT_02021853</strain>
    </source>
</reference>
<name>E4PD_SALDC</name>
<keyword id="KW-0963">Cytoplasm</keyword>
<keyword id="KW-0520">NAD</keyword>
<keyword id="KW-0560">Oxidoreductase</keyword>
<keyword id="KW-0664">Pyridoxine biosynthesis</keyword>
<comment type="function">
    <text evidence="1">Catalyzes the NAD-dependent conversion of D-erythrose 4-phosphate to 4-phosphoerythronate.</text>
</comment>
<comment type="catalytic activity">
    <reaction evidence="1">
        <text>D-erythrose 4-phosphate + NAD(+) + H2O = 4-phospho-D-erythronate + NADH + 2 H(+)</text>
        <dbReference type="Rhea" id="RHEA:12056"/>
        <dbReference type="ChEBI" id="CHEBI:15377"/>
        <dbReference type="ChEBI" id="CHEBI:15378"/>
        <dbReference type="ChEBI" id="CHEBI:16897"/>
        <dbReference type="ChEBI" id="CHEBI:57540"/>
        <dbReference type="ChEBI" id="CHEBI:57945"/>
        <dbReference type="ChEBI" id="CHEBI:58766"/>
        <dbReference type="EC" id="1.2.1.72"/>
    </reaction>
</comment>
<comment type="pathway">
    <text evidence="1">Cofactor biosynthesis; pyridoxine 5'-phosphate biosynthesis; pyridoxine 5'-phosphate from D-erythrose 4-phosphate: step 1/5.</text>
</comment>
<comment type="subunit">
    <text evidence="1">Homotetramer.</text>
</comment>
<comment type="subcellular location">
    <subcellularLocation>
        <location evidence="1">Cytoplasm</location>
    </subcellularLocation>
</comment>
<comment type="similarity">
    <text evidence="1">Belongs to the glyceraldehyde-3-phosphate dehydrogenase family. Epd subfamily.</text>
</comment>
<proteinExistence type="inferred from homology"/>
<dbReference type="EC" id="1.2.1.72" evidence="1"/>
<dbReference type="EMBL" id="CP001144">
    <property type="protein sequence ID" value="ACH74712.1"/>
    <property type="molecule type" value="Genomic_DNA"/>
</dbReference>
<dbReference type="RefSeq" id="WP_000218333.1">
    <property type="nucleotide sequence ID" value="NC_011205.1"/>
</dbReference>
<dbReference type="SMR" id="B5FUI3"/>
<dbReference type="KEGG" id="sed:SeD_A3412"/>
<dbReference type="HOGENOM" id="CLU_030140_0_0_6"/>
<dbReference type="UniPathway" id="UPA00244">
    <property type="reaction ID" value="UER00309"/>
</dbReference>
<dbReference type="Proteomes" id="UP000008322">
    <property type="component" value="Chromosome"/>
</dbReference>
<dbReference type="GO" id="GO:0005737">
    <property type="term" value="C:cytoplasm"/>
    <property type="evidence" value="ECO:0007669"/>
    <property type="project" value="UniProtKB-SubCell"/>
</dbReference>
<dbReference type="GO" id="GO:0048001">
    <property type="term" value="F:erythrose-4-phosphate dehydrogenase activity"/>
    <property type="evidence" value="ECO:0007669"/>
    <property type="project" value="UniProtKB-UniRule"/>
</dbReference>
<dbReference type="GO" id="GO:0051287">
    <property type="term" value="F:NAD binding"/>
    <property type="evidence" value="ECO:0007669"/>
    <property type="project" value="InterPro"/>
</dbReference>
<dbReference type="GO" id="GO:0050661">
    <property type="term" value="F:NADP binding"/>
    <property type="evidence" value="ECO:0007669"/>
    <property type="project" value="InterPro"/>
</dbReference>
<dbReference type="GO" id="GO:0006006">
    <property type="term" value="P:glucose metabolic process"/>
    <property type="evidence" value="ECO:0007669"/>
    <property type="project" value="InterPro"/>
</dbReference>
<dbReference type="GO" id="GO:0042823">
    <property type="term" value="P:pyridoxal phosphate biosynthetic process"/>
    <property type="evidence" value="ECO:0007669"/>
    <property type="project" value="UniProtKB-UniRule"/>
</dbReference>
<dbReference type="GO" id="GO:0008615">
    <property type="term" value="P:pyridoxine biosynthetic process"/>
    <property type="evidence" value="ECO:0007669"/>
    <property type="project" value="UniProtKB-UniRule"/>
</dbReference>
<dbReference type="CDD" id="cd23937">
    <property type="entry name" value="GAPDH_C_E4PDH"/>
    <property type="match status" value="1"/>
</dbReference>
<dbReference type="CDD" id="cd17892">
    <property type="entry name" value="GAPDH_N_E4PDH"/>
    <property type="match status" value="1"/>
</dbReference>
<dbReference type="FunFam" id="3.30.360.10:FF:000007">
    <property type="entry name" value="D-erythrose-4-phosphate dehydrogenase"/>
    <property type="match status" value="1"/>
</dbReference>
<dbReference type="FunFam" id="3.40.50.720:FF:000001">
    <property type="entry name" value="Glyceraldehyde-3-phosphate dehydrogenase"/>
    <property type="match status" value="1"/>
</dbReference>
<dbReference type="Gene3D" id="3.30.360.10">
    <property type="entry name" value="Dihydrodipicolinate Reductase, domain 2"/>
    <property type="match status" value="1"/>
</dbReference>
<dbReference type="Gene3D" id="3.40.50.720">
    <property type="entry name" value="NAD(P)-binding Rossmann-like Domain"/>
    <property type="match status" value="1"/>
</dbReference>
<dbReference type="HAMAP" id="MF_01640">
    <property type="entry name" value="E4P_dehydrog"/>
    <property type="match status" value="1"/>
</dbReference>
<dbReference type="InterPro" id="IPR006422">
    <property type="entry name" value="E4P_DH_bac"/>
</dbReference>
<dbReference type="InterPro" id="IPR020831">
    <property type="entry name" value="GlycerAld/Erythrose_P_DH"/>
</dbReference>
<dbReference type="InterPro" id="IPR020830">
    <property type="entry name" value="GlycerAld_3-P_DH_AS"/>
</dbReference>
<dbReference type="InterPro" id="IPR020829">
    <property type="entry name" value="GlycerAld_3-P_DH_cat"/>
</dbReference>
<dbReference type="InterPro" id="IPR020828">
    <property type="entry name" value="GlycerAld_3-P_DH_NAD(P)-bd"/>
</dbReference>
<dbReference type="InterPro" id="IPR006424">
    <property type="entry name" value="Glyceraldehyde-3-P_DH_1"/>
</dbReference>
<dbReference type="InterPro" id="IPR036291">
    <property type="entry name" value="NAD(P)-bd_dom_sf"/>
</dbReference>
<dbReference type="NCBIfam" id="TIGR01532">
    <property type="entry name" value="E4PD_g-proteo"/>
    <property type="match status" value="1"/>
</dbReference>
<dbReference type="NCBIfam" id="TIGR01534">
    <property type="entry name" value="GAPDH-I"/>
    <property type="match status" value="1"/>
</dbReference>
<dbReference type="NCBIfam" id="NF010058">
    <property type="entry name" value="PRK13535.1"/>
    <property type="match status" value="1"/>
</dbReference>
<dbReference type="PANTHER" id="PTHR43148">
    <property type="entry name" value="GLYCERALDEHYDE-3-PHOSPHATE DEHYDROGENASE 2"/>
    <property type="match status" value="1"/>
</dbReference>
<dbReference type="Pfam" id="PF02800">
    <property type="entry name" value="Gp_dh_C"/>
    <property type="match status" value="1"/>
</dbReference>
<dbReference type="Pfam" id="PF00044">
    <property type="entry name" value="Gp_dh_N"/>
    <property type="match status" value="1"/>
</dbReference>
<dbReference type="PIRSF" id="PIRSF000149">
    <property type="entry name" value="GAP_DH"/>
    <property type="match status" value="1"/>
</dbReference>
<dbReference type="PRINTS" id="PR00078">
    <property type="entry name" value="G3PDHDRGNASE"/>
</dbReference>
<dbReference type="SMART" id="SM00846">
    <property type="entry name" value="Gp_dh_N"/>
    <property type="match status" value="1"/>
</dbReference>
<dbReference type="SUPFAM" id="SSF55347">
    <property type="entry name" value="Glyceraldehyde-3-phosphate dehydrogenase-like, C-terminal domain"/>
    <property type="match status" value="1"/>
</dbReference>
<dbReference type="SUPFAM" id="SSF51735">
    <property type="entry name" value="NAD(P)-binding Rossmann-fold domains"/>
    <property type="match status" value="1"/>
</dbReference>
<dbReference type="PROSITE" id="PS00071">
    <property type="entry name" value="GAPDH"/>
    <property type="match status" value="1"/>
</dbReference>
<sequence length="348" mass="38126">MTVRIAINGFGRIGRNVVRALYESGRRAEITVVAINELADAAGMAHLLKYDTSHGRFAWEVRHEREQLFVGDDVIRILHERTLADLPWRELGVDVVLDCTGVYGNREHGEAHIAAGAKKVLFSHPGSNDLDATVVFGVNQNELRAEHRIVSNASCTTNCIIPVIKLLDDAYGIESGTVTTIHSAMNDQQVIDAYHSDLRRTRAASQSIIPVDTKLAAGITRIFPQFNDRFEAIAVRVPTINVTAIDLSVTVKKPVKASEVNQLLQKAAQGAFHGIVDYTESPLVSIDFNHDPHSAIVDGTQTRVSGAHLIKTLVWCDNEWGFANRMLDTTLAMAAVGFRLDASASTKL</sequence>
<accession>B5FUI3</accession>